<reference key="1">
    <citation type="submission" date="2006-03" db="EMBL/GenBank/DDBJ databases">
        <title>Complete sequence of chromosome of Psychrobacter cryohalolentis K5.</title>
        <authorList>
            <consortium name="US DOE Joint Genome Institute"/>
            <person name="Copeland A."/>
            <person name="Lucas S."/>
            <person name="Lapidus A."/>
            <person name="Barry K."/>
            <person name="Detter J.C."/>
            <person name="Glavina T."/>
            <person name="Hammon N."/>
            <person name="Israni S."/>
            <person name="Dalin E."/>
            <person name="Tice H."/>
            <person name="Pitluck S."/>
            <person name="Brettin T."/>
            <person name="Bruce D."/>
            <person name="Han C."/>
            <person name="Tapia R."/>
            <person name="Sims D.R."/>
            <person name="Gilna P."/>
            <person name="Schmutz J."/>
            <person name="Larimer F."/>
            <person name="Land M."/>
            <person name="Hauser L."/>
            <person name="Kyrpides N."/>
            <person name="Kim E."/>
            <person name="Richardson P."/>
        </authorList>
    </citation>
    <scope>NUCLEOTIDE SEQUENCE [LARGE SCALE GENOMIC DNA]</scope>
    <source>
        <strain>ATCC BAA-1226 / DSM 17306 / VKM B-2378 / K5</strain>
    </source>
</reference>
<comment type="function">
    <text evidence="1">Catalyzes the phosphorolysis of diverse nucleosides, yielding D-ribose 1-phosphate and the respective free bases. Can use uridine, adenosine, guanosine, cytidine, thymidine, inosine and xanthosine as substrates. Also catalyzes the reverse reactions.</text>
</comment>
<comment type="catalytic activity">
    <reaction evidence="1">
        <text>a purine D-ribonucleoside + phosphate = a purine nucleobase + alpha-D-ribose 1-phosphate</text>
        <dbReference type="Rhea" id="RHEA:19805"/>
        <dbReference type="ChEBI" id="CHEBI:26386"/>
        <dbReference type="ChEBI" id="CHEBI:43474"/>
        <dbReference type="ChEBI" id="CHEBI:57720"/>
        <dbReference type="ChEBI" id="CHEBI:142355"/>
        <dbReference type="EC" id="2.4.2.1"/>
    </reaction>
</comment>
<comment type="catalytic activity">
    <reaction evidence="1">
        <text>adenosine + phosphate = alpha-D-ribose 1-phosphate + adenine</text>
        <dbReference type="Rhea" id="RHEA:27642"/>
        <dbReference type="ChEBI" id="CHEBI:16335"/>
        <dbReference type="ChEBI" id="CHEBI:16708"/>
        <dbReference type="ChEBI" id="CHEBI:43474"/>
        <dbReference type="ChEBI" id="CHEBI:57720"/>
        <dbReference type="EC" id="2.4.2.1"/>
    </reaction>
</comment>
<comment type="catalytic activity">
    <reaction evidence="1">
        <text>cytidine + phosphate = cytosine + alpha-D-ribose 1-phosphate</text>
        <dbReference type="Rhea" id="RHEA:52540"/>
        <dbReference type="ChEBI" id="CHEBI:16040"/>
        <dbReference type="ChEBI" id="CHEBI:17562"/>
        <dbReference type="ChEBI" id="CHEBI:43474"/>
        <dbReference type="ChEBI" id="CHEBI:57720"/>
        <dbReference type="EC" id="2.4.2.2"/>
    </reaction>
</comment>
<comment type="catalytic activity">
    <reaction evidence="1">
        <text>guanosine + phosphate = alpha-D-ribose 1-phosphate + guanine</text>
        <dbReference type="Rhea" id="RHEA:13233"/>
        <dbReference type="ChEBI" id="CHEBI:16235"/>
        <dbReference type="ChEBI" id="CHEBI:16750"/>
        <dbReference type="ChEBI" id="CHEBI:43474"/>
        <dbReference type="ChEBI" id="CHEBI:57720"/>
        <dbReference type="EC" id="2.4.2.1"/>
    </reaction>
</comment>
<comment type="catalytic activity">
    <reaction evidence="1">
        <text>inosine + phosphate = alpha-D-ribose 1-phosphate + hypoxanthine</text>
        <dbReference type="Rhea" id="RHEA:27646"/>
        <dbReference type="ChEBI" id="CHEBI:17368"/>
        <dbReference type="ChEBI" id="CHEBI:17596"/>
        <dbReference type="ChEBI" id="CHEBI:43474"/>
        <dbReference type="ChEBI" id="CHEBI:57720"/>
        <dbReference type="EC" id="2.4.2.1"/>
    </reaction>
</comment>
<comment type="catalytic activity">
    <reaction evidence="1">
        <text>thymidine + phosphate = 2-deoxy-alpha-D-ribose 1-phosphate + thymine</text>
        <dbReference type="Rhea" id="RHEA:16037"/>
        <dbReference type="ChEBI" id="CHEBI:17748"/>
        <dbReference type="ChEBI" id="CHEBI:17821"/>
        <dbReference type="ChEBI" id="CHEBI:43474"/>
        <dbReference type="ChEBI" id="CHEBI:57259"/>
        <dbReference type="EC" id="2.4.2.2"/>
    </reaction>
</comment>
<comment type="catalytic activity">
    <reaction evidence="1">
        <text>uridine + phosphate = alpha-D-ribose 1-phosphate + uracil</text>
        <dbReference type="Rhea" id="RHEA:24388"/>
        <dbReference type="ChEBI" id="CHEBI:16704"/>
        <dbReference type="ChEBI" id="CHEBI:17568"/>
        <dbReference type="ChEBI" id="CHEBI:43474"/>
        <dbReference type="ChEBI" id="CHEBI:57720"/>
        <dbReference type="EC" id="2.4.2.2"/>
    </reaction>
</comment>
<comment type="catalytic activity">
    <reaction evidence="1">
        <text>xanthosine + phosphate = alpha-D-ribose 1-phosphate + xanthine</text>
        <dbReference type="Rhea" id="RHEA:27638"/>
        <dbReference type="ChEBI" id="CHEBI:17712"/>
        <dbReference type="ChEBI" id="CHEBI:18107"/>
        <dbReference type="ChEBI" id="CHEBI:43474"/>
        <dbReference type="ChEBI" id="CHEBI:57720"/>
        <dbReference type="EC" id="2.4.2.1"/>
    </reaction>
</comment>
<comment type="similarity">
    <text evidence="1">Belongs to the nucleoside phosphorylase PpnP family.</text>
</comment>
<organism>
    <name type="scientific">Psychrobacter cryohalolentis (strain ATCC BAA-1226 / DSM 17306 / VKM B-2378 / K5)</name>
    <dbReference type="NCBI Taxonomy" id="335284"/>
    <lineage>
        <taxon>Bacteria</taxon>
        <taxon>Pseudomonadati</taxon>
        <taxon>Pseudomonadota</taxon>
        <taxon>Gammaproteobacteria</taxon>
        <taxon>Moraxellales</taxon>
        <taxon>Moraxellaceae</taxon>
        <taxon>Psychrobacter</taxon>
    </lineage>
</organism>
<name>PPNP2_PSYCK</name>
<sequence length="94" mass="10451">MPSVNNYFENKVTSIAFQTATKPATVGVMEIGEYEFGTSEFETMSVVSGALTVKLPESDEWQTFNAGEQFTIEANQKFQVKVEVESAYLCTYGK</sequence>
<gene>
    <name evidence="1" type="primary">ppnP2</name>
    <name type="ordered locus">Pcryo_0835</name>
</gene>
<keyword id="KW-0328">Glycosyltransferase</keyword>
<keyword id="KW-0808">Transferase</keyword>
<evidence type="ECO:0000255" key="1">
    <source>
        <dbReference type="HAMAP-Rule" id="MF_01537"/>
    </source>
</evidence>
<proteinExistence type="inferred from homology"/>
<feature type="chain" id="PRO_0000298717" description="Pyrimidine/purine nucleoside phosphorylase 2">
    <location>
        <begin position="1"/>
        <end position="94"/>
    </location>
</feature>
<dbReference type="EC" id="2.4.2.1" evidence="1"/>
<dbReference type="EC" id="2.4.2.2" evidence="1"/>
<dbReference type="EMBL" id="CP000323">
    <property type="protein sequence ID" value="ABE74618.1"/>
    <property type="molecule type" value="Genomic_DNA"/>
</dbReference>
<dbReference type="RefSeq" id="WP_011513181.1">
    <property type="nucleotide sequence ID" value="NC_007969.1"/>
</dbReference>
<dbReference type="SMR" id="Q1QCI5"/>
<dbReference type="STRING" id="335284.Pcryo_0835"/>
<dbReference type="KEGG" id="pcr:Pcryo_0835"/>
<dbReference type="eggNOG" id="COG3123">
    <property type="taxonomic scope" value="Bacteria"/>
</dbReference>
<dbReference type="HOGENOM" id="CLU_157874_0_0_6"/>
<dbReference type="Proteomes" id="UP000002425">
    <property type="component" value="Chromosome"/>
</dbReference>
<dbReference type="GO" id="GO:0005829">
    <property type="term" value="C:cytosol"/>
    <property type="evidence" value="ECO:0007669"/>
    <property type="project" value="TreeGrafter"/>
</dbReference>
<dbReference type="GO" id="GO:0047975">
    <property type="term" value="F:guanosine phosphorylase activity"/>
    <property type="evidence" value="ECO:0007669"/>
    <property type="project" value="UniProtKB-EC"/>
</dbReference>
<dbReference type="GO" id="GO:0004731">
    <property type="term" value="F:purine-nucleoside phosphorylase activity"/>
    <property type="evidence" value="ECO:0007669"/>
    <property type="project" value="UniProtKB-UniRule"/>
</dbReference>
<dbReference type="GO" id="GO:0009032">
    <property type="term" value="F:thymidine phosphorylase activity"/>
    <property type="evidence" value="ECO:0007669"/>
    <property type="project" value="UniProtKB-EC"/>
</dbReference>
<dbReference type="GO" id="GO:0004850">
    <property type="term" value="F:uridine phosphorylase activity"/>
    <property type="evidence" value="ECO:0007669"/>
    <property type="project" value="UniProtKB-EC"/>
</dbReference>
<dbReference type="FunFam" id="2.60.120.10:FF:000016">
    <property type="entry name" value="Pyrimidine/purine nucleoside phosphorylase"/>
    <property type="match status" value="1"/>
</dbReference>
<dbReference type="Gene3D" id="2.60.120.10">
    <property type="entry name" value="Jelly Rolls"/>
    <property type="match status" value="1"/>
</dbReference>
<dbReference type="HAMAP" id="MF_01537">
    <property type="entry name" value="Nucleos_phosphorylase_PpnP"/>
    <property type="match status" value="1"/>
</dbReference>
<dbReference type="InterPro" id="IPR009664">
    <property type="entry name" value="Ppnp"/>
</dbReference>
<dbReference type="InterPro" id="IPR014710">
    <property type="entry name" value="RmlC-like_jellyroll"/>
</dbReference>
<dbReference type="InterPro" id="IPR011051">
    <property type="entry name" value="RmlC_Cupin_sf"/>
</dbReference>
<dbReference type="PANTHER" id="PTHR36540">
    <property type="entry name" value="PYRIMIDINE/PURINE NUCLEOSIDE PHOSPHORYLASE"/>
    <property type="match status" value="1"/>
</dbReference>
<dbReference type="PANTHER" id="PTHR36540:SF1">
    <property type="entry name" value="PYRIMIDINE_PURINE NUCLEOSIDE PHOSPHORYLASE"/>
    <property type="match status" value="1"/>
</dbReference>
<dbReference type="Pfam" id="PF06865">
    <property type="entry name" value="Ppnp"/>
    <property type="match status" value="1"/>
</dbReference>
<dbReference type="SUPFAM" id="SSF51182">
    <property type="entry name" value="RmlC-like cupins"/>
    <property type="match status" value="1"/>
</dbReference>
<protein>
    <recommendedName>
        <fullName evidence="1">Pyrimidine/purine nucleoside phosphorylase 2</fullName>
        <ecNumber evidence="1">2.4.2.1</ecNumber>
        <ecNumber evidence="1">2.4.2.2</ecNumber>
    </recommendedName>
    <alternativeName>
        <fullName evidence="1">Adenosine phosphorylase 2</fullName>
    </alternativeName>
    <alternativeName>
        <fullName evidence="1">Cytidine phosphorylase 2</fullName>
    </alternativeName>
    <alternativeName>
        <fullName evidence="1">Guanosine phosphorylase 2</fullName>
    </alternativeName>
    <alternativeName>
        <fullName evidence="1">Inosine phosphorylase 2</fullName>
    </alternativeName>
    <alternativeName>
        <fullName evidence="1">Thymidine phosphorylase 2</fullName>
    </alternativeName>
    <alternativeName>
        <fullName evidence="1">Uridine phosphorylase 2</fullName>
    </alternativeName>
    <alternativeName>
        <fullName evidence="1">Xanthosine phosphorylase 2</fullName>
    </alternativeName>
</protein>
<accession>Q1QCI5</accession>